<dbReference type="EMBL" id="AE017125">
    <property type="protein sequence ID" value="AAP76949.1"/>
    <property type="molecule type" value="Genomic_DNA"/>
</dbReference>
<dbReference type="SMR" id="Q7VJ91"/>
<dbReference type="STRING" id="235279.HH_0352"/>
<dbReference type="KEGG" id="hhe:HH_0352"/>
<dbReference type="eggNOG" id="COG0864">
    <property type="taxonomic scope" value="Bacteria"/>
</dbReference>
<dbReference type="HOGENOM" id="CLU_113319_1_0_7"/>
<dbReference type="OrthoDB" id="9806294at2"/>
<dbReference type="Proteomes" id="UP000002495">
    <property type="component" value="Chromosome"/>
</dbReference>
<dbReference type="GO" id="GO:0003677">
    <property type="term" value="F:DNA binding"/>
    <property type="evidence" value="ECO:0007669"/>
    <property type="project" value="UniProtKB-KW"/>
</dbReference>
<dbReference type="GO" id="GO:0003700">
    <property type="term" value="F:DNA-binding transcription factor activity"/>
    <property type="evidence" value="ECO:0007669"/>
    <property type="project" value="UniProtKB-UniRule"/>
</dbReference>
<dbReference type="GO" id="GO:0016151">
    <property type="term" value="F:nickel cation binding"/>
    <property type="evidence" value="ECO:0007669"/>
    <property type="project" value="UniProtKB-UniRule"/>
</dbReference>
<dbReference type="GO" id="GO:0010045">
    <property type="term" value="P:response to nickel cation"/>
    <property type="evidence" value="ECO:0007669"/>
    <property type="project" value="InterPro"/>
</dbReference>
<dbReference type="CDD" id="cd22231">
    <property type="entry name" value="RHH_NikR_HicB-like"/>
    <property type="match status" value="1"/>
</dbReference>
<dbReference type="Gene3D" id="3.30.70.1150">
    <property type="entry name" value="ACT-like. Chain A, domain 2"/>
    <property type="match status" value="1"/>
</dbReference>
<dbReference type="Gene3D" id="1.10.1220.10">
    <property type="entry name" value="Met repressor-like"/>
    <property type="match status" value="1"/>
</dbReference>
<dbReference type="HAMAP" id="MF_00476">
    <property type="entry name" value="NikR"/>
    <property type="match status" value="1"/>
</dbReference>
<dbReference type="InterPro" id="IPR027271">
    <property type="entry name" value="Acetolactate_synth/TF_NikR_C"/>
</dbReference>
<dbReference type="InterPro" id="IPR045865">
    <property type="entry name" value="ACT-like_dom_sf"/>
</dbReference>
<dbReference type="InterPro" id="IPR013321">
    <property type="entry name" value="Arc_rbn_hlx_hlx"/>
</dbReference>
<dbReference type="InterPro" id="IPR002145">
    <property type="entry name" value="CopG"/>
</dbReference>
<dbReference type="InterPro" id="IPR050192">
    <property type="entry name" value="CopG/NikR_regulator"/>
</dbReference>
<dbReference type="InterPro" id="IPR022988">
    <property type="entry name" value="Ni_resp_reg_NikR"/>
</dbReference>
<dbReference type="InterPro" id="IPR010985">
    <property type="entry name" value="Ribbon_hlx_hlx"/>
</dbReference>
<dbReference type="InterPro" id="IPR014864">
    <property type="entry name" value="TF_NikR_Ni-bd_C"/>
</dbReference>
<dbReference type="NCBIfam" id="NF001884">
    <property type="entry name" value="PRK00630.1"/>
    <property type="match status" value="1"/>
</dbReference>
<dbReference type="NCBIfam" id="NF002169">
    <property type="entry name" value="PRK01002.1"/>
    <property type="match status" value="1"/>
</dbReference>
<dbReference type="NCBIfam" id="NF002815">
    <property type="entry name" value="PRK02967.1"/>
    <property type="match status" value="1"/>
</dbReference>
<dbReference type="NCBIfam" id="NF003381">
    <property type="entry name" value="PRK04460.1"/>
    <property type="match status" value="1"/>
</dbReference>
<dbReference type="PANTHER" id="PTHR34719">
    <property type="entry name" value="NICKEL-RESPONSIVE REGULATOR"/>
    <property type="match status" value="1"/>
</dbReference>
<dbReference type="PANTHER" id="PTHR34719:SF2">
    <property type="entry name" value="NICKEL-RESPONSIVE REGULATOR"/>
    <property type="match status" value="1"/>
</dbReference>
<dbReference type="Pfam" id="PF08753">
    <property type="entry name" value="NikR_C"/>
    <property type="match status" value="1"/>
</dbReference>
<dbReference type="Pfam" id="PF01402">
    <property type="entry name" value="RHH_1"/>
    <property type="match status" value="1"/>
</dbReference>
<dbReference type="SUPFAM" id="SSF55021">
    <property type="entry name" value="ACT-like"/>
    <property type="match status" value="1"/>
</dbReference>
<dbReference type="SUPFAM" id="SSF47598">
    <property type="entry name" value="Ribbon-helix-helix"/>
    <property type="match status" value="1"/>
</dbReference>
<proteinExistence type="inferred from homology"/>
<keyword id="KW-0238">DNA-binding</keyword>
<keyword id="KW-0479">Metal-binding</keyword>
<keyword id="KW-0533">Nickel</keyword>
<keyword id="KW-1185">Reference proteome</keyword>
<keyword id="KW-0804">Transcription</keyword>
<keyword id="KW-0805">Transcription regulation</keyword>
<sequence>MKSSIIRFSVSLPQNLLETLDERLTHKGYSSRSEIVRDMIREKLNEEIWSSGAENTQGVAVLTIIYDHHQRELNQRMIDIQHTSTHKGNVEILCNTHVHLDQHNCLETIILRGNGVHIEDLSIEIGGLKGVKFSKLTRASRFE</sequence>
<protein>
    <recommendedName>
        <fullName evidence="1">Putative nickel-responsive regulator</fullName>
    </recommendedName>
</protein>
<accession>Q7VJ91</accession>
<feature type="chain" id="PRO_0000139290" description="Putative nickel-responsive regulator">
    <location>
        <begin position="1"/>
        <end position="143"/>
    </location>
</feature>
<feature type="binding site" evidence="1">
    <location>
        <position position="82"/>
    </location>
    <ligand>
        <name>Ni(2+)</name>
        <dbReference type="ChEBI" id="CHEBI:49786"/>
    </ligand>
</feature>
<feature type="binding site" evidence="1">
    <location>
        <position position="97"/>
    </location>
    <ligand>
        <name>Ni(2+)</name>
        <dbReference type="ChEBI" id="CHEBI:49786"/>
    </ligand>
</feature>
<feature type="binding site" evidence="1">
    <location>
        <position position="99"/>
    </location>
    <ligand>
        <name>Ni(2+)</name>
        <dbReference type="ChEBI" id="CHEBI:49786"/>
    </ligand>
</feature>
<feature type="binding site" evidence="1">
    <location>
        <position position="105"/>
    </location>
    <ligand>
        <name>Ni(2+)</name>
        <dbReference type="ChEBI" id="CHEBI:49786"/>
    </ligand>
</feature>
<evidence type="ECO:0000255" key="1">
    <source>
        <dbReference type="HAMAP-Rule" id="MF_00476"/>
    </source>
</evidence>
<name>NIKR_HELHP</name>
<reference key="1">
    <citation type="journal article" date="2003" name="Proc. Natl. Acad. Sci. U.S.A.">
        <title>The complete genome sequence of the carcinogenic bacterium Helicobacter hepaticus.</title>
        <authorList>
            <person name="Suerbaum S."/>
            <person name="Josenhans C."/>
            <person name="Sterzenbach T."/>
            <person name="Drescher B."/>
            <person name="Brandt P."/>
            <person name="Bell M."/>
            <person name="Droege M."/>
            <person name="Fartmann B."/>
            <person name="Fischer H.-P."/>
            <person name="Ge Z."/>
            <person name="Hoerster A."/>
            <person name="Holland R."/>
            <person name="Klein K."/>
            <person name="Koenig J."/>
            <person name="Macko L."/>
            <person name="Mendz G.L."/>
            <person name="Nyakatura G."/>
            <person name="Schauer D.B."/>
            <person name="Shen Z."/>
            <person name="Weber J."/>
            <person name="Frosch M."/>
            <person name="Fox J.G."/>
        </authorList>
    </citation>
    <scope>NUCLEOTIDE SEQUENCE [LARGE SCALE GENOMIC DNA]</scope>
    <source>
        <strain>ATCC 51449 / 3B1</strain>
    </source>
</reference>
<organism>
    <name type="scientific">Helicobacter hepaticus (strain ATCC 51449 / 3B1)</name>
    <dbReference type="NCBI Taxonomy" id="235279"/>
    <lineage>
        <taxon>Bacteria</taxon>
        <taxon>Pseudomonadati</taxon>
        <taxon>Campylobacterota</taxon>
        <taxon>Epsilonproteobacteria</taxon>
        <taxon>Campylobacterales</taxon>
        <taxon>Helicobacteraceae</taxon>
        <taxon>Helicobacter</taxon>
    </lineage>
</organism>
<gene>
    <name type="ordered locus">HH_0352</name>
</gene>
<comment type="function">
    <text evidence="1">Transcriptional regulator.</text>
</comment>
<comment type="cofactor">
    <cofactor evidence="1">
        <name>Ni(2+)</name>
        <dbReference type="ChEBI" id="CHEBI:49786"/>
    </cofactor>
    <text evidence="1">Binds 1 nickel ion per subunit.</text>
</comment>
<comment type="similarity">
    <text evidence="1">Belongs to the transcriptional regulatory CopG/NikR family.</text>
</comment>